<keyword id="KW-1185">Reference proteome</keyword>
<keyword id="KW-0687">Ribonucleoprotein</keyword>
<keyword id="KW-0689">Ribosomal protein</keyword>
<keyword id="KW-0694">RNA-binding</keyword>
<keyword id="KW-0699">rRNA-binding</keyword>
<comment type="function">
    <text evidence="1">Binds to 23S rRNA. Forms part of two intersubunit bridges in the 70S ribosome.</text>
</comment>
<comment type="subunit">
    <text evidence="1">Part of the 50S ribosomal subunit. Forms a cluster with proteins L3 and L19. In the 70S ribosome, L14 and L19 interact and together make contacts with the 16S rRNA in bridges B5 and B8.</text>
</comment>
<comment type="similarity">
    <text evidence="1">Belongs to the universal ribosomal protein uL14 family.</text>
</comment>
<reference key="1">
    <citation type="journal article" date="2012" name="Stand. Genomic Sci.">
        <title>Complete genome sequence of Polynucleobacter necessarius subsp. asymbioticus type strain (QLW-P1DMWA-1(T)).</title>
        <authorList>
            <person name="Meincke L."/>
            <person name="Copeland A."/>
            <person name="Lapidus A."/>
            <person name="Lucas S."/>
            <person name="Berry K.W."/>
            <person name="Del Rio T.G."/>
            <person name="Hammon N."/>
            <person name="Dalin E."/>
            <person name="Tice H."/>
            <person name="Pitluck S."/>
            <person name="Richardson P."/>
            <person name="Bruce D."/>
            <person name="Goodwin L."/>
            <person name="Han C."/>
            <person name="Tapia R."/>
            <person name="Detter J.C."/>
            <person name="Schmutz J."/>
            <person name="Brettin T."/>
            <person name="Larimer F."/>
            <person name="Land M."/>
            <person name="Hauser L."/>
            <person name="Kyrpides N.C."/>
            <person name="Ivanova N."/>
            <person name="Goker M."/>
            <person name="Woyke T."/>
            <person name="Wu Q.L."/>
            <person name="Pockl M."/>
            <person name="Hahn M.W."/>
            <person name="Klenk H.P."/>
        </authorList>
    </citation>
    <scope>NUCLEOTIDE SEQUENCE [LARGE SCALE GENOMIC DNA]</scope>
    <source>
        <strain>DSM 18221 / CIP 109841 / QLW-P1DMWA-1</strain>
    </source>
</reference>
<feature type="chain" id="PRO_1000087138" description="Large ribosomal subunit protein uL14">
    <location>
        <begin position="1"/>
        <end position="122"/>
    </location>
</feature>
<organism>
    <name type="scientific">Polynucleobacter asymbioticus (strain DSM 18221 / CIP 109841 / QLW-P1DMWA-1)</name>
    <name type="common">Polynucleobacter necessarius subsp. asymbioticus</name>
    <dbReference type="NCBI Taxonomy" id="312153"/>
    <lineage>
        <taxon>Bacteria</taxon>
        <taxon>Pseudomonadati</taxon>
        <taxon>Pseudomonadota</taxon>
        <taxon>Betaproteobacteria</taxon>
        <taxon>Burkholderiales</taxon>
        <taxon>Burkholderiaceae</taxon>
        <taxon>Polynucleobacter</taxon>
    </lineage>
</organism>
<evidence type="ECO:0000255" key="1">
    <source>
        <dbReference type="HAMAP-Rule" id="MF_01367"/>
    </source>
</evidence>
<evidence type="ECO:0000305" key="2"/>
<name>RL14_POLAQ</name>
<sequence>MIQTESRLQVADNTGASEVLCIKVLGGSKRRYASIGDVIKVSVKSAAPRGRVKKGDIYNAVVVRTAKGVRRPDGSLIKFDANAAVLLNAKLEPIGTRIFGPVTRELRTEKFMKIVSLAPEVI</sequence>
<proteinExistence type="inferred from homology"/>
<protein>
    <recommendedName>
        <fullName evidence="1">Large ribosomal subunit protein uL14</fullName>
    </recommendedName>
    <alternativeName>
        <fullName evidence="2">50S ribosomal protein L14</fullName>
    </alternativeName>
</protein>
<accession>A4SUX1</accession>
<dbReference type="EMBL" id="CP000655">
    <property type="protein sequence ID" value="ABP33285.1"/>
    <property type="molecule type" value="Genomic_DNA"/>
</dbReference>
<dbReference type="RefSeq" id="WP_011901910.1">
    <property type="nucleotide sequence ID" value="NC_009379.1"/>
</dbReference>
<dbReference type="SMR" id="A4SUX1"/>
<dbReference type="GeneID" id="83596667"/>
<dbReference type="KEGG" id="pnu:Pnuc_0063"/>
<dbReference type="eggNOG" id="COG0093">
    <property type="taxonomic scope" value="Bacteria"/>
</dbReference>
<dbReference type="HOGENOM" id="CLU_095071_2_1_4"/>
<dbReference type="Proteomes" id="UP000000231">
    <property type="component" value="Chromosome"/>
</dbReference>
<dbReference type="GO" id="GO:0022625">
    <property type="term" value="C:cytosolic large ribosomal subunit"/>
    <property type="evidence" value="ECO:0007669"/>
    <property type="project" value="TreeGrafter"/>
</dbReference>
<dbReference type="GO" id="GO:0070180">
    <property type="term" value="F:large ribosomal subunit rRNA binding"/>
    <property type="evidence" value="ECO:0007669"/>
    <property type="project" value="TreeGrafter"/>
</dbReference>
<dbReference type="GO" id="GO:0003735">
    <property type="term" value="F:structural constituent of ribosome"/>
    <property type="evidence" value="ECO:0007669"/>
    <property type="project" value="InterPro"/>
</dbReference>
<dbReference type="GO" id="GO:0006412">
    <property type="term" value="P:translation"/>
    <property type="evidence" value="ECO:0007669"/>
    <property type="project" value="UniProtKB-UniRule"/>
</dbReference>
<dbReference type="CDD" id="cd00337">
    <property type="entry name" value="Ribosomal_uL14"/>
    <property type="match status" value="1"/>
</dbReference>
<dbReference type="FunFam" id="2.40.150.20:FF:000001">
    <property type="entry name" value="50S ribosomal protein L14"/>
    <property type="match status" value="1"/>
</dbReference>
<dbReference type="Gene3D" id="2.40.150.20">
    <property type="entry name" value="Ribosomal protein L14"/>
    <property type="match status" value="1"/>
</dbReference>
<dbReference type="HAMAP" id="MF_01367">
    <property type="entry name" value="Ribosomal_uL14"/>
    <property type="match status" value="1"/>
</dbReference>
<dbReference type="InterPro" id="IPR000218">
    <property type="entry name" value="Ribosomal_uL14"/>
</dbReference>
<dbReference type="InterPro" id="IPR005745">
    <property type="entry name" value="Ribosomal_uL14_bac-type"/>
</dbReference>
<dbReference type="InterPro" id="IPR019972">
    <property type="entry name" value="Ribosomal_uL14_CS"/>
</dbReference>
<dbReference type="InterPro" id="IPR036853">
    <property type="entry name" value="Ribosomal_uL14_sf"/>
</dbReference>
<dbReference type="NCBIfam" id="TIGR01067">
    <property type="entry name" value="rplN_bact"/>
    <property type="match status" value="1"/>
</dbReference>
<dbReference type="PANTHER" id="PTHR11761">
    <property type="entry name" value="50S/60S RIBOSOMAL PROTEIN L14/L23"/>
    <property type="match status" value="1"/>
</dbReference>
<dbReference type="PANTHER" id="PTHR11761:SF3">
    <property type="entry name" value="LARGE RIBOSOMAL SUBUNIT PROTEIN UL14M"/>
    <property type="match status" value="1"/>
</dbReference>
<dbReference type="Pfam" id="PF00238">
    <property type="entry name" value="Ribosomal_L14"/>
    <property type="match status" value="1"/>
</dbReference>
<dbReference type="SMART" id="SM01374">
    <property type="entry name" value="Ribosomal_L14"/>
    <property type="match status" value="1"/>
</dbReference>
<dbReference type="SUPFAM" id="SSF50193">
    <property type="entry name" value="Ribosomal protein L14"/>
    <property type="match status" value="1"/>
</dbReference>
<dbReference type="PROSITE" id="PS00049">
    <property type="entry name" value="RIBOSOMAL_L14"/>
    <property type="match status" value="1"/>
</dbReference>
<gene>
    <name evidence="1" type="primary">rplN</name>
    <name type="ordered locus">Pnuc_0063</name>
</gene>